<organism>
    <name type="scientific">Brucella abortus (strain 2308)</name>
    <dbReference type="NCBI Taxonomy" id="359391"/>
    <lineage>
        <taxon>Bacteria</taxon>
        <taxon>Pseudomonadati</taxon>
        <taxon>Pseudomonadota</taxon>
        <taxon>Alphaproteobacteria</taxon>
        <taxon>Hyphomicrobiales</taxon>
        <taxon>Brucellaceae</taxon>
        <taxon>Brucella/Ochrobactrum group</taxon>
        <taxon>Brucella</taxon>
    </lineage>
</organism>
<evidence type="ECO:0000255" key="1">
    <source>
        <dbReference type="HAMAP-Rule" id="MF_00451"/>
    </source>
</evidence>
<feature type="chain" id="PRO_0000226549" description="Nucleoside diphosphate kinase">
    <location>
        <begin position="1"/>
        <end position="140"/>
    </location>
</feature>
<feature type="active site" description="Pros-phosphohistidine intermediate" evidence="1">
    <location>
        <position position="117"/>
    </location>
</feature>
<feature type="binding site" evidence="1">
    <location>
        <position position="11"/>
    </location>
    <ligand>
        <name>ATP</name>
        <dbReference type="ChEBI" id="CHEBI:30616"/>
    </ligand>
</feature>
<feature type="binding site" evidence="1">
    <location>
        <position position="59"/>
    </location>
    <ligand>
        <name>ATP</name>
        <dbReference type="ChEBI" id="CHEBI:30616"/>
    </ligand>
</feature>
<feature type="binding site" evidence="1">
    <location>
        <position position="87"/>
    </location>
    <ligand>
        <name>ATP</name>
        <dbReference type="ChEBI" id="CHEBI:30616"/>
    </ligand>
</feature>
<feature type="binding site" evidence="1">
    <location>
        <position position="93"/>
    </location>
    <ligand>
        <name>ATP</name>
        <dbReference type="ChEBI" id="CHEBI:30616"/>
    </ligand>
</feature>
<feature type="binding site" evidence="1">
    <location>
        <position position="104"/>
    </location>
    <ligand>
        <name>ATP</name>
        <dbReference type="ChEBI" id="CHEBI:30616"/>
    </ligand>
</feature>
<feature type="binding site" evidence="1">
    <location>
        <position position="114"/>
    </location>
    <ligand>
        <name>ATP</name>
        <dbReference type="ChEBI" id="CHEBI:30616"/>
    </ligand>
</feature>
<keyword id="KW-0067">ATP-binding</keyword>
<keyword id="KW-0963">Cytoplasm</keyword>
<keyword id="KW-0418">Kinase</keyword>
<keyword id="KW-0460">Magnesium</keyword>
<keyword id="KW-0479">Metal-binding</keyword>
<keyword id="KW-0546">Nucleotide metabolism</keyword>
<keyword id="KW-0547">Nucleotide-binding</keyword>
<keyword id="KW-0597">Phosphoprotein</keyword>
<keyword id="KW-1185">Reference proteome</keyword>
<keyword id="KW-0808">Transferase</keyword>
<reference key="1">
    <citation type="journal article" date="2005" name="Infect. Immun.">
        <title>Whole-genome analyses of speciation events in pathogenic Brucellae.</title>
        <authorList>
            <person name="Chain P.S."/>
            <person name="Comerci D.J."/>
            <person name="Tolmasky M.E."/>
            <person name="Larimer F.W."/>
            <person name="Malfatti S.A."/>
            <person name="Vergez L.M."/>
            <person name="Aguero F."/>
            <person name="Land M.L."/>
            <person name="Ugalde R.A."/>
            <person name="Garcia E."/>
        </authorList>
    </citation>
    <scope>NUCLEOTIDE SEQUENCE [LARGE SCALE GENOMIC DNA]</scope>
    <source>
        <strain>2308</strain>
    </source>
</reference>
<gene>
    <name evidence="1" type="primary">ndk</name>
    <name type="ordered locus">BAB1_0715</name>
</gene>
<sequence length="140" mass="15278">MAIERTFSMIKPDATRRNLTGAIIAKLEEAGLRVVASKRVWMSRREAEGFYAVHKDRPFFGELVEFMSSGPTVVQVLEGENAIAKNREVMGATNPANADEGTIRKTFALSIGENSVHGSDAPETAAEEIAYWFSGTEIVG</sequence>
<accession>Q2YN40</accession>
<dbReference type="EC" id="2.7.4.6" evidence="1"/>
<dbReference type="EMBL" id="AM040264">
    <property type="protein sequence ID" value="CAJ10671.1"/>
    <property type="molecule type" value="Genomic_DNA"/>
</dbReference>
<dbReference type="RefSeq" id="WP_002963836.1">
    <property type="nucleotide sequence ID" value="NZ_KN046823.1"/>
</dbReference>
<dbReference type="SMR" id="Q2YN40"/>
<dbReference type="STRING" id="359391.BAB1_0715"/>
<dbReference type="GeneID" id="97533983"/>
<dbReference type="KEGG" id="bmf:BAB1_0715"/>
<dbReference type="PATRIC" id="fig|359391.11.peg.3026"/>
<dbReference type="HOGENOM" id="CLU_060216_8_1_5"/>
<dbReference type="Proteomes" id="UP000002719">
    <property type="component" value="Chromosome I"/>
</dbReference>
<dbReference type="GO" id="GO:0005737">
    <property type="term" value="C:cytoplasm"/>
    <property type="evidence" value="ECO:0007669"/>
    <property type="project" value="UniProtKB-SubCell"/>
</dbReference>
<dbReference type="GO" id="GO:0005524">
    <property type="term" value="F:ATP binding"/>
    <property type="evidence" value="ECO:0007669"/>
    <property type="project" value="UniProtKB-UniRule"/>
</dbReference>
<dbReference type="GO" id="GO:0046872">
    <property type="term" value="F:metal ion binding"/>
    <property type="evidence" value="ECO:0007669"/>
    <property type="project" value="UniProtKB-KW"/>
</dbReference>
<dbReference type="GO" id="GO:0004550">
    <property type="term" value="F:nucleoside diphosphate kinase activity"/>
    <property type="evidence" value="ECO:0007669"/>
    <property type="project" value="UniProtKB-UniRule"/>
</dbReference>
<dbReference type="GO" id="GO:0006241">
    <property type="term" value="P:CTP biosynthetic process"/>
    <property type="evidence" value="ECO:0007669"/>
    <property type="project" value="UniProtKB-UniRule"/>
</dbReference>
<dbReference type="GO" id="GO:0006183">
    <property type="term" value="P:GTP biosynthetic process"/>
    <property type="evidence" value="ECO:0007669"/>
    <property type="project" value="UniProtKB-UniRule"/>
</dbReference>
<dbReference type="GO" id="GO:0006228">
    <property type="term" value="P:UTP biosynthetic process"/>
    <property type="evidence" value="ECO:0007669"/>
    <property type="project" value="UniProtKB-UniRule"/>
</dbReference>
<dbReference type="CDD" id="cd04413">
    <property type="entry name" value="NDPk_I"/>
    <property type="match status" value="1"/>
</dbReference>
<dbReference type="FunFam" id="3.30.70.141:FF:000001">
    <property type="entry name" value="Nucleoside diphosphate kinase"/>
    <property type="match status" value="1"/>
</dbReference>
<dbReference type="Gene3D" id="3.30.70.141">
    <property type="entry name" value="Nucleoside diphosphate kinase-like domain"/>
    <property type="match status" value="1"/>
</dbReference>
<dbReference type="HAMAP" id="MF_00451">
    <property type="entry name" value="NDP_kinase"/>
    <property type="match status" value="1"/>
</dbReference>
<dbReference type="InterPro" id="IPR034907">
    <property type="entry name" value="NDK-like_dom"/>
</dbReference>
<dbReference type="InterPro" id="IPR036850">
    <property type="entry name" value="NDK-like_dom_sf"/>
</dbReference>
<dbReference type="InterPro" id="IPR001564">
    <property type="entry name" value="Nucleoside_diP_kinase"/>
</dbReference>
<dbReference type="InterPro" id="IPR023005">
    <property type="entry name" value="Nucleoside_diP_kinase_AS"/>
</dbReference>
<dbReference type="NCBIfam" id="NF001908">
    <property type="entry name" value="PRK00668.1"/>
    <property type="match status" value="1"/>
</dbReference>
<dbReference type="PANTHER" id="PTHR11349">
    <property type="entry name" value="NUCLEOSIDE DIPHOSPHATE KINASE"/>
    <property type="match status" value="1"/>
</dbReference>
<dbReference type="Pfam" id="PF00334">
    <property type="entry name" value="NDK"/>
    <property type="match status" value="1"/>
</dbReference>
<dbReference type="PRINTS" id="PR01243">
    <property type="entry name" value="NUCDPKINASE"/>
</dbReference>
<dbReference type="SMART" id="SM00562">
    <property type="entry name" value="NDK"/>
    <property type="match status" value="1"/>
</dbReference>
<dbReference type="SUPFAM" id="SSF54919">
    <property type="entry name" value="Nucleoside diphosphate kinase, NDK"/>
    <property type="match status" value="1"/>
</dbReference>
<dbReference type="PROSITE" id="PS00469">
    <property type="entry name" value="NDPK"/>
    <property type="match status" value="1"/>
</dbReference>
<dbReference type="PROSITE" id="PS51374">
    <property type="entry name" value="NDPK_LIKE"/>
    <property type="match status" value="1"/>
</dbReference>
<name>NDK_BRUA2</name>
<proteinExistence type="inferred from homology"/>
<comment type="function">
    <text evidence="1">Major role in the synthesis of nucleoside triphosphates other than ATP. The ATP gamma phosphate is transferred to the NDP beta phosphate via a ping-pong mechanism, using a phosphorylated active-site intermediate.</text>
</comment>
<comment type="catalytic activity">
    <reaction evidence="1">
        <text>a 2'-deoxyribonucleoside 5'-diphosphate + ATP = a 2'-deoxyribonucleoside 5'-triphosphate + ADP</text>
        <dbReference type="Rhea" id="RHEA:44640"/>
        <dbReference type="ChEBI" id="CHEBI:30616"/>
        <dbReference type="ChEBI" id="CHEBI:61560"/>
        <dbReference type="ChEBI" id="CHEBI:73316"/>
        <dbReference type="ChEBI" id="CHEBI:456216"/>
        <dbReference type="EC" id="2.7.4.6"/>
    </reaction>
</comment>
<comment type="catalytic activity">
    <reaction evidence="1">
        <text>a ribonucleoside 5'-diphosphate + ATP = a ribonucleoside 5'-triphosphate + ADP</text>
        <dbReference type="Rhea" id="RHEA:18113"/>
        <dbReference type="ChEBI" id="CHEBI:30616"/>
        <dbReference type="ChEBI" id="CHEBI:57930"/>
        <dbReference type="ChEBI" id="CHEBI:61557"/>
        <dbReference type="ChEBI" id="CHEBI:456216"/>
        <dbReference type="EC" id="2.7.4.6"/>
    </reaction>
</comment>
<comment type="cofactor">
    <cofactor evidence="1">
        <name>Mg(2+)</name>
        <dbReference type="ChEBI" id="CHEBI:18420"/>
    </cofactor>
</comment>
<comment type="subunit">
    <text evidence="1">Homotetramer.</text>
</comment>
<comment type="subcellular location">
    <subcellularLocation>
        <location evidence="1">Cytoplasm</location>
    </subcellularLocation>
</comment>
<comment type="similarity">
    <text evidence="1">Belongs to the NDK family.</text>
</comment>
<protein>
    <recommendedName>
        <fullName evidence="1">Nucleoside diphosphate kinase</fullName>
        <shortName evidence="1">NDK</shortName>
        <shortName evidence="1">NDP kinase</shortName>
        <ecNumber evidence="1">2.7.4.6</ecNumber>
    </recommendedName>
    <alternativeName>
        <fullName evidence="1">Nucleoside-2-P kinase</fullName>
    </alternativeName>
</protein>